<sequence length="600" mass="68725">MVNNMTDLTAQEPAWQTRDHLDDPVIGELRNRFGPDAFTVQATRTGVPVVWIKREQLLEVGDFLKKLPKPYVMLFDLHGMDERLRTHREGLPAADFSVFYHLISIDRNRDIMLKVALAENDLHVPTFTKLFPNANWYERETWDLFGITFDGHPNLRRIMMPQTWKGHPLRKDYPARATEFSPFELTKAKQDLEMEALTFKPEEWGMKRGTENEDFMFLNLGPNHPSAHGAFRIVLQLDGEEIVDCVPDIGYHHRGAEKMGERQSWHSYIPYTDRIEYLGGCVNEMPYVLAVEKLAGITVPDRVNVIRVMLSELFRINSHLLYISTFIQDVGAMTPVFFAFTDRQKIYDLVEAITGFRMHPAWFRIGGVAHDLPRGWDRLLREFLDWMPKRLASYEKAALQNTILKGRSQGVAAYGAKEALEWGTTGAGLRATGIDFDVRKARPYSGYENFDFEIPVGGGVSDCYTRVMLKVEELRQSLRILEQCLNNMPEGPFKADHPLTTPPPKERTLQHIETLITHFLQVSWGPVMPANESFQMIEATKGINSYYLTSDGSTMSYRTRIRTPSYAHLQQIPAAIRGSLVSDLIVYLGSIDFVMSDVDR</sequence>
<protein>
    <recommendedName>
        <fullName evidence="1">NADH-quinone oxidoreductase subunit C/D</fullName>
        <ecNumber evidence="1">7.1.1.-</ecNumber>
    </recommendedName>
    <alternativeName>
        <fullName evidence="1">NADH dehydrogenase I subunit C/D</fullName>
    </alternativeName>
    <alternativeName>
        <fullName evidence="1">NDH-1 subunit C/D</fullName>
    </alternativeName>
</protein>
<comment type="function">
    <text evidence="1">NDH-1 shuttles electrons from NADH, via FMN and iron-sulfur (Fe-S) centers, to quinones in the respiratory chain. The immediate electron acceptor for the enzyme in this species is believed to be ubiquinone. Couples the redox reaction to proton translocation (for every two electrons transferred, four hydrogen ions are translocated across the cytoplasmic membrane), and thus conserves the redox energy in a proton gradient.</text>
</comment>
<comment type="catalytic activity">
    <reaction evidence="1">
        <text>a quinone + NADH + 5 H(+)(in) = a quinol + NAD(+) + 4 H(+)(out)</text>
        <dbReference type="Rhea" id="RHEA:57888"/>
        <dbReference type="ChEBI" id="CHEBI:15378"/>
        <dbReference type="ChEBI" id="CHEBI:24646"/>
        <dbReference type="ChEBI" id="CHEBI:57540"/>
        <dbReference type="ChEBI" id="CHEBI:57945"/>
        <dbReference type="ChEBI" id="CHEBI:132124"/>
    </reaction>
</comment>
<comment type="subunit">
    <text evidence="1">NDH-1 is composed of 13 different subunits. Subunits NuoB, CD, E, F, and G constitute the peripheral sector of the complex.</text>
</comment>
<comment type="subcellular location">
    <subcellularLocation>
        <location evidence="1">Cell inner membrane</location>
        <topology evidence="1">Peripheral membrane protein</topology>
        <orientation evidence="1">Cytoplasmic side</orientation>
    </subcellularLocation>
</comment>
<comment type="similarity">
    <text evidence="1">In the N-terminal section; belongs to the complex I 30 kDa subunit family.</text>
</comment>
<comment type="similarity">
    <text evidence="1">In the C-terminal section; belongs to the complex I 49 kDa subunit family.</text>
</comment>
<evidence type="ECO:0000255" key="1">
    <source>
        <dbReference type="HAMAP-Rule" id="MF_01359"/>
    </source>
</evidence>
<accession>B7LM46</accession>
<gene>
    <name evidence="1" type="primary">nuoC</name>
    <name evidence="1" type="synonym">nuoCD</name>
    <name evidence="1" type="synonym">nuoD</name>
    <name type="ordered locus">EFER_0884</name>
</gene>
<dbReference type="EC" id="7.1.1.-" evidence="1"/>
<dbReference type="EMBL" id="CU928158">
    <property type="protein sequence ID" value="CAQ88419.1"/>
    <property type="molecule type" value="Genomic_DNA"/>
</dbReference>
<dbReference type="RefSeq" id="WP_000247878.1">
    <property type="nucleotide sequence ID" value="NC_011740.1"/>
</dbReference>
<dbReference type="SMR" id="B7LM46"/>
<dbReference type="GeneID" id="93774888"/>
<dbReference type="KEGG" id="efe:EFER_0884"/>
<dbReference type="HOGENOM" id="CLU_015134_3_2_6"/>
<dbReference type="OrthoDB" id="9801496at2"/>
<dbReference type="Proteomes" id="UP000000745">
    <property type="component" value="Chromosome"/>
</dbReference>
<dbReference type="GO" id="GO:0030964">
    <property type="term" value="C:NADH dehydrogenase complex"/>
    <property type="evidence" value="ECO:0007669"/>
    <property type="project" value="InterPro"/>
</dbReference>
<dbReference type="GO" id="GO:0005886">
    <property type="term" value="C:plasma membrane"/>
    <property type="evidence" value="ECO:0007669"/>
    <property type="project" value="UniProtKB-SubCell"/>
</dbReference>
<dbReference type="GO" id="GO:0051287">
    <property type="term" value="F:NAD binding"/>
    <property type="evidence" value="ECO:0007669"/>
    <property type="project" value="InterPro"/>
</dbReference>
<dbReference type="GO" id="GO:0008137">
    <property type="term" value="F:NADH dehydrogenase (ubiquinone) activity"/>
    <property type="evidence" value="ECO:0007669"/>
    <property type="project" value="InterPro"/>
</dbReference>
<dbReference type="GO" id="GO:0050136">
    <property type="term" value="F:NADH:ubiquinone reductase (non-electrogenic) activity"/>
    <property type="evidence" value="ECO:0007669"/>
    <property type="project" value="UniProtKB-UniRule"/>
</dbReference>
<dbReference type="GO" id="GO:0048038">
    <property type="term" value="F:quinone binding"/>
    <property type="evidence" value="ECO:0007669"/>
    <property type="project" value="UniProtKB-KW"/>
</dbReference>
<dbReference type="FunFam" id="1.10.645.10:FF:000001">
    <property type="entry name" value="NADH-quinone oxidoreductase subunit C/D"/>
    <property type="match status" value="1"/>
</dbReference>
<dbReference type="FunFam" id="3.30.460.80:FF:000001">
    <property type="entry name" value="NADH-quinone oxidoreductase subunit C/D"/>
    <property type="match status" value="1"/>
</dbReference>
<dbReference type="Gene3D" id="1.10.645.10">
    <property type="entry name" value="Cytochrome-c3 Hydrogenase, chain B"/>
    <property type="match status" value="1"/>
</dbReference>
<dbReference type="Gene3D" id="3.30.460.80">
    <property type="entry name" value="NADH:ubiquinone oxidoreductase, 30kDa subunit"/>
    <property type="match status" value="1"/>
</dbReference>
<dbReference type="HAMAP" id="MF_01357">
    <property type="entry name" value="NDH1_NuoC"/>
    <property type="match status" value="1"/>
</dbReference>
<dbReference type="HAMAP" id="MF_01359">
    <property type="entry name" value="NDH1_NuoCD_1"/>
    <property type="match status" value="1"/>
</dbReference>
<dbReference type="HAMAP" id="MF_01358">
    <property type="entry name" value="NDH1_NuoD"/>
    <property type="match status" value="1"/>
</dbReference>
<dbReference type="InterPro" id="IPR010218">
    <property type="entry name" value="NADH_DH_suC"/>
</dbReference>
<dbReference type="InterPro" id="IPR023062">
    <property type="entry name" value="NADH_DH_suCD"/>
</dbReference>
<dbReference type="InterPro" id="IPR001135">
    <property type="entry name" value="NADH_Q_OxRdtase_suD"/>
</dbReference>
<dbReference type="InterPro" id="IPR037232">
    <property type="entry name" value="NADH_quin_OxRdtase_su_C/D-like"/>
</dbReference>
<dbReference type="InterPro" id="IPR001268">
    <property type="entry name" value="NADH_UbQ_OxRdtase_30kDa_su"/>
</dbReference>
<dbReference type="InterPro" id="IPR014029">
    <property type="entry name" value="NADH_UbQ_OxRdtase_49kDa_CS"/>
</dbReference>
<dbReference type="InterPro" id="IPR020396">
    <property type="entry name" value="NADH_UbQ_OxRdtase_CS"/>
</dbReference>
<dbReference type="InterPro" id="IPR022885">
    <property type="entry name" value="NDH1_su_D/H"/>
</dbReference>
<dbReference type="InterPro" id="IPR029014">
    <property type="entry name" value="NiFe-Hase_large"/>
</dbReference>
<dbReference type="NCBIfam" id="TIGR01961">
    <property type="entry name" value="NuoC_fam"/>
    <property type="match status" value="1"/>
</dbReference>
<dbReference type="NCBIfam" id="TIGR01962">
    <property type="entry name" value="NuoD"/>
    <property type="match status" value="1"/>
</dbReference>
<dbReference type="NCBIfam" id="NF004739">
    <property type="entry name" value="PRK06075.1"/>
    <property type="match status" value="1"/>
</dbReference>
<dbReference type="NCBIfam" id="NF008728">
    <property type="entry name" value="PRK11742.1"/>
    <property type="match status" value="1"/>
</dbReference>
<dbReference type="PANTHER" id="PTHR11993:SF45">
    <property type="entry name" value="NADH-QUINONE OXIDOREDUCTASE SUBUNIT C_D"/>
    <property type="match status" value="1"/>
</dbReference>
<dbReference type="PANTHER" id="PTHR11993">
    <property type="entry name" value="NADH-UBIQUINONE OXIDOREDUCTASE 49 KDA SUBUNIT"/>
    <property type="match status" value="1"/>
</dbReference>
<dbReference type="Pfam" id="PF00329">
    <property type="entry name" value="Complex1_30kDa"/>
    <property type="match status" value="1"/>
</dbReference>
<dbReference type="Pfam" id="PF00346">
    <property type="entry name" value="Complex1_49kDa"/>
    <property type="match status" value="1"/>
</dbReference>
<dbReference type="SUPFAM" id="SSF56762">
    <property type="entry name" value="HydB/Nqo4-like"/>
    <property type="match status" value="1"/>
</dbReference>
<dbReference type="SUPFAM" id="SSF143243">
    <property type="entry name" value="Nqo5-like"/>
    <property type="match status" value="1"/>
</dbReference>
<dbReference type="PROSITE" id="PS00542">
    <property type="entry name" value="COMPLEX1_30K"/>
    <property type="match status" value="1"/>
</dbReference>
<dbReference type="PROSITE" id="PS00535">
    <property type="entry name" value="COMPLEX1_49K"/>
    <property type="match status" value="1"/>
</dbReference>
<feature type="chain" id="PRO_1000143690" description="NADH-quinone oxidoreductase subunit C/D">
    <location>
        <begin position="1"/>
        <end position="600"/>
    </location>
</feature>
<feature type="region of interest" description="NADH dehydrogenase I subunit C" evidence="1">
    <location>
        <begin position="1"/>
        <end position="190"/>
    </location>
</feature>
<feature type="region of interest" description="NADH dehydrogenase I subunit D" evidence="1">
    <location>
        <begin position="214"/>
        <end position="600"/>
    </location>
</feature>
<keyword id="KW-0997">Cell inner membrane</keyword>
<keyword id="KW-1003">Cell membrane</keyword>
<keyword id="KW-0472">Membrane</keyword>
<keyword id="KW-0511">Multifunctional enzyme</keyword>
<keyword id="KW-0520">NAD</keyword>
<keyword id="KW-0874">Quinone</keyword>
<keyword id="KW-1278">Translocase</keyword>
<keyword id="KW-0813">Transport</keyword>
<keyword id="KW-0830">Ubiquinone</keyword>
<proteinExistence type="inferred from homology"/>
<reference key="1">
    <citation type="journal article" date="2009" name="PLoS Genet.">
        <title>Organised genome dynamics in the Escherichia coli species results in highly diverse adaptive paths.</title>
        <authorList>
            <person name="Touchon M."/>
            <person name="Hoede C."/>
            <person name="Tenaillon O."/>
            <person name="Barbe V."/>
            <person name="Baeriswyl S."/>
            <person name="Bidet P."/>
            <person name="Bingen E."/>
            <person name="Bonacorsi S."/>
            <person name="Bouchier C."/>
            <person name="Bouvet O."/>
            <person name="Calteau A."/>
            <person name="Chiapello H."/>
            <person name="Clermont O."/>
            <person name="Cruveiller S."/>
            <person name="Danchin A."/>
            <person name="Diard M."/>
            <person name="Dossat C."/>
            <person name="Karoui M.E."/>
            <person name="Frapy E."/>
            <person name="Garry L."/>
            <person name="Ghigo J.M."/>
            <person name="Gilles A.M."/>
            <person name="Johnson J."/>
            <person name="Le Bouguenec C."/>
            <person name="Lescat M."/>
            <person name="Mangenot S."/>
            <person name="Martinez-Jehanne V."/>
            <person name="Matic I."/>
            <person name="Nassif X."/>
            <person name="Oztas S."/>
            <person name="Petit M.A."/>
            <person name="Pichon C."/>
            <person name="Rouy Z."/>
            <person name="Ruf C.S."/>
            <person name="Schneider D."/>
            <person name="Tourret J."/>
            <person name="Vacherie B."/>
            <person name="Vallenet D."/>
            <person name="Medigue C."/>
            <person name="Rocha E.P.C."/>
            <person name="Denamur E."/>
        </authorList>
    </citation>
    <scope>NUCLEOTIDE SEQUENCE [LARGE SCALE GENOMIC DNA]</scope>
    <source>
        <strain>ATCC 35469 / DSM 13698 / BCRC 15582 / CCUG 18766 / IAM 14443 / JCM 21226 / LMG 7866 / NBRC 102419 / NCTC 12128 / CDC 0568-73</strain>
    </source>
</reference>
<name>NUOCD_ESCF3</name>
<organism>
    <name type="scientific">Escherichia fergusonii (strain ATCC 35469 / DSM 13698 / CCUG 18766 / IAM 14443 / JCM 21226 / LMG 7866 / NBRC 102419 / NCTC 12128 / CDC 0568-73)</name>
    <dbReference type="NCBI Taxonomy" id="585054"/>
    <lineage>
        <taxon>Bacteria</taxon>
        <taxon>Pseudomonadati</taxon>
        <taxon>Pseudomonadota</taxon>
        <taxon>Gammaproteobacteria</taxon>
        <taxon>Enterobacterales</taxon>
        <taxon>Enterobacteriaceae</taxon>
        <taxon>Escherichia</taxon>
    </lineage>
</organism>